<organism>
    <name type="scientific">Geodia cydonium</name>
    <name type="common">Sponge</name>
    <dbReference type="NCBI Taxonomy" id="6047"/>
    <lineage>
        <taxon>Eukaryota</taxon>
        <taxon>Metazoa</taxon>
        <taxon>Porifera</taxon>
        <taxon>Demospongiae</taxon>
        <taxon>Heteroscleromorpha</taxon>
        <taxon>Tetractinellida</taxon>
        <taxon>Astrophorina</taxon>
        <taxon>Geodiidae</taxon>
        <taxon>Geodia</taxon>
    </lineage>
</organism>
<proteinExistence type="evidence at transcript level"/>
<dbReference type="EMBL" id="X70917">
    <property type="protein sequence ID" value="CAA50268.1"/>
    <property type="molecule type" value="mRNA"/>
</dbReference>
<dbReference type="PIR" id="S32020">
    <property type="entry name" value="S32020"/>
</dbReference>
<dbReference type="SMR" id="P59669"/>
<dbReference type="GO" id="GO:0005737">
    <property type="term" value="C:cytoplasm"/>
    <property type="evidence" value="ECO:0007669"/>
    <property type="project" value="UniProtKB-SubCell"/>
</dbReference>
<dbReference type="GO" id="GO:0005634">
    <property type="term" value="C:nucleus"/>
    <property type="evidence" value="ECO:0007669"/>
    <property type="project" value="UniProtKB-SubCell"/>
</dbReference>
<dbReference type="CDD" id="cd01803">
    <property type="entry name" value="Ubl_ubiquitin"/>
    <property type="match status" value="6"/>
</dbReference>
<dbReference type="FunFam" id="3.10.20.90:FF:000158">
    <property type="entry name" value="Polyubiquitin 5"/>
    <property type="match status" value="3"/>
</dbReference>
<dbReference type="FunFam" id="3.10.20.90:FF:000014">
    <property type="entry name" value="Ubiquitin-60S ribosomal L40 fusion"/>
    <property type="match status" value="3"/>
</dbReference>
<dbReference type="Gene3D" id="3.10.20.90">
    <property type="entry name" value="Phosphatidylinositol 3-kinase Catalytic Subunit, Chain A, domain 1"/>
    <property type="match status" value="6"/>
</dbReference>
<dbReference type="InterPro" id="IPR000626">
    <property type="entry name" value="Ubiquitin-like_dom"/>
</dbReference>
<dbReference type="InterPro" id="IPR029071">
    <property type="entry name" value="Ubiquitin-like_domsf"/>
</dbReference>
<dbReference type="InterPro" id="IPR019954">
    <property type="entry name" value="Ubiquitin_CS"/>
</dbReference>
<dbReference type="InterPro" id="IPR019956">
    <property type="entry name" value="Ubiquitin_dom"/>
</dbReference>
<dbReference type="InterPro" id="IPR050158">
    <property type="entry name" value="Ubiquitin_ubiquitin-like"/>
</dbReference>
<dbReference type="PANTHER" id="PTHR10666">
    <property type="entry name" value="UBIQUITIN"/>
    <property type="match status" value="1"/>
</dbReference>
<dbReference type="Pfam" id="PF00240">
    <property type="entry name" value="ubiquitin"/>
    <property type="match status" value="6"/>
</dbReference>
<dbReference type="PRINTS" id="PR00348">
    <property type="entry name" value="UBIQUITIN"/>
</dbReference>
<dbReference type="SMART" id="SM00213">
    <property type="entry name" value="UBQ"/>
    <property type="match status" value="6"/>
</dbReference>
<dbReference type="SUPFAM" id="SSF54236">
    <property type="entry name" value="Ubiquitin-like"/>
    <property type="match status" value="6"/>
</dbReference>
<dbReference type="PROSITE" id="PS00299">
    <property type="entry name" value="UBIQUITIN_1"/>
    <property type="match status" value="6"/>
</dbReference>
<dbReference type="PROSITE" id="PS50053">
    <property type="entry name" value="UBIQUITIN_2"/>
    <property type="match status" value="6"/>
</dbReference>
<evidence type="ECO:0000250" key="1"/>
<evidence type="ECO:0000255" key="2">
    <source>
        <dbReference type="PROSITE-ProRule" id="PRU00214"/>
    </source>
</evidence>
<evidence type="ECO:0000305" key="3"/>
<feature type="chain" id="PRO_0000114818" description="Ubiquitin">
    <location>
        <begin position="1"/>
        <end position="76"/>
    </location>
</feature>
<feature type="chain" id="PRO_0000396351" description="Ubiquitin">
    <location>
        <begin position="77"/>
        <end position="152"/>
    </location>
</feature>
<feature type="chain" id="PRO_0000396352" description="Ubiquitin">
    <location>
        <begin position="153"/>
        <end position="228"/>
    </location>
</feature>
<feature type="chain" id="PRO_0000396353" description="Ubiquitin-related">
    <location>
        <begin position="229"/>
        <end position="304"/>
    </location>
</feature>
<feature type="chain" id="PRO_0000396354" description="Ubiquitin">
    <location>
        <begin position="305"/>
        <end position="380"/>
    </location>
</feature>
<feature type="chain" id="PRO_0000396355" description="Ubiquitin">
    <location>
        <begin position="381"/>
        <end position="456"/>
    </location>
</feature>
<feature type="propeptide" id="PRO_0000396356">
    <location>
        <position position="457"/>
    </location>
</feature>
<feature type="domain" description="Ubiquitin-like 1" evidence="2">
    <location>
        <begin position="1"/>
        <end position="76"/>
    </location>
</feature>
<feature type="domain" description="Ubiquitin-like 2" evidence="2">
    <location>
        <begin position="77"/>
        <end position="152"/>
    </location>
</feature>
<feature type="domain" description="Ubiquitin-like 3" evidence="2">
    <location>
        <begin position="153"/>
        <end position="228"/>
    </location>
</feature>
<feature type="domain" description="Ubiquitin-like 4" evidence="2">
    <location>
        <begin position="229"/>
        <end position="304"/>
    </location>
</feature>
<feature type="domain" description="Ubiquitin-like 5" evidence="2">
    <location>
        <begin position="305"/>
        <end position="380"/>
    </location>
</feature>
<feature type="domain" description="Ubiquitin-like 6" evidence="2">
    <location>
        <begin position="381"/>
        <end position="456"/>
    </location>
</feature>
<feature type="cross-link" description="Glycyl lysine isopeptide (Lys-Gly) (interchain with G-Cter in ubiquitin)" evidence="1">
    <location>
        <position position="48"/>
    </location>
</feature>
<feature type="cross-link" description="Glycyl lysine isopeptide (Gly-Lys) (interchain with K-? in acceptor proteins)" evidence="2">
    <location>
        <position position="76"/>
    </location>
</feature>
<sequence>MQIFVKTLTGKTITLEVEASDTIENVKAKIQDKEGIPPDQQRLIFAGKQLEDGRTLSDYNIQKESTLHLVLRLRGGMQIFVKTLTGKTITLEVEASDTIENVKAKIQDKEGIPPDQQRLIFAGKQLEDGRTLSDYNIQKESTLHLVLRLRGGMQIFVKTLTGKTITLEVEASDTIENVKAKIQDKEGIPPDQQRLIFAGKQLEDGRTLSDYNIQKESTLHLVLRLRGGMQIFVKTLTGKTITLEVEASDTIENVKAKIQDKEGIPPDQQRLIFAGKQLEDGRTLSDYNIQKESTLHLVVRLRGGMQIFVKTLTGKTITLEVEASDTIENVKAKIQDKEGIPPDQQRLIFAGKQLEDGRTLSDYNIQKESTLHLVLRLRGGMQIFVKTLTGKTITLEVEASDTIENVKAKIQDKEGIPPDQQRLIFAGKQLEDGRTLSDYNIQKESTLHLVLRLRGGF</sequence>
<protein>
    <recommendedName>
        <fullName>Polyubiquitin</fullName>
    </recommendedName>
    <component>
        <recommendedName>
            <fullName>Ubiquitin</fullName>
        </recommendedName>
    </component>
    <component>
        <recommendedName>
            <fullName>Ubiquitin-related</fullName>
        </recommendedName>
    </component>
</protein>
<keyword id="KW-0963">Cytoplasm</keyword>
<keyword id="KW-1017">Isopeptide bond</keyword>
<keyword id="KW-0539">Nucleus</keyword>
<keyword id="KW-0677">Repeat</keyword>
<keyword id="KW-0832">Ubl conjugation</keyword>
<reference key="1">
    <citation type="journal article" date="1993" name="J. Cell Sci.">
        <title>Cloning of the polyubiquitin cDNA from the marine sponge Geodia cydonium and its preferential expression during reaggregation of cells.</title>
        <authorList>
            <person name="Pfeifer K."/>
            <person name="Frank K."/>
            <person name="Schroeder H.C."/>
            <person name="Gamulin V."/>
            <person name="Rinkevich B."/>
            <person name="Batel R."/>
            <person name="Mueller I.M."/>
            <person name="Mueller W.E.G."/>
        </authorList>
    </citation>
    <scope>NUCLEOTIDE SEQUENCE [MRNA]</scope>
</reference>
<accession>P59669</accession>
<name>UBIQP_GEOCY</name>
<comment type="function">
    <text evidence="1">Ubiquitin exists either covalently attached to another protein, or free (unanchored). When covalently bound, it is conjugated to target proteins via an isopeptide bond either as a monomer (monoubiquitin), a polymer linked via different Lys residues of the ubiquitin (polyubiquitin chains) or a linear polymer linked via the initiator Met of the ubiquitin (linear polyubiquitin chains). Polyubiquitin chains, when attached to a target protein, have different functions depending on the Lys residue of the ubiquitin that is linked: Lys-48-linked is involved in protein degradation via the proteasome. Linear polymer chains formed via attachment by the initiator Met lead to cell signaling. Ubiquitin is usually conjugated to Lys residues of target proteins, however, in rare cases, conjugation to Cys or Ser residues has been observed. When polyubiquitin is free (unanchored-polyubiquitin), it also has distinct roles, such as in activation of protein kinases, and in signaling (By similarity).</text>
</comment>
<comment type="subcellular location">
    <subcellularLocation>
        <location evidence="1">Cytoplasm</location>
    </subcellularLocation>
    <subcellularLocation>
        <location evidence="1">Nucleus</location>
    </subcellularLocation>
</comment>
<comment type="miscellaneous">
    <text>For the sake of clarity sequence features are annotated only for the first chain, and are not repeated for each of the following chains.</text>
</comment>
<comment type="similarity">
    <text evidence="3">Belongs to the ubiquitin family.</text>
</comment>